<sequence length="130" mass="14375">MSLMDPLADALTNIRNNELQGNDSCVIKPASKLIGHVLSTMQKENYIGNFELVDDGKAGIFNVELVGNINKCGVIKPRHAVKNTEFEDYEKRYLPAKNFGILIVTTPQGVMTHHEAKEAGIGGRLLVYVY</sequence>
<organism>
    <name type="scientific">Methanosphaera stadtmanae (strain ATCC 43021 / DSM 3091 / JCM 11832 / MCB-3)</name>
    <dbReference type="NCBI Taxonomy" id="339860"/>
    <lineage>
        <taxon>Archaea</taxon>
        <taxon>Methanobacteriati</taxon>
        <taxon>Methanobacteriota</taxon>
        <taxon>Methanomada group</taxon>
        <taxon>Methanobacteria</taxon>
        <taxon>Methanobacteriales</taxon>
        <taxon>Methanobacteriaceae</taxon>
        <taxon>Methanosphaera</taxon>
    </lineage>
</organism>
<dbReference type="EMBL" id="CP000102">
    <property type="protein sequence ID" value="ABC57281.1"/>
    <property type="molecule type" value="Genomic_DNA"/>
</dbReference>
<dbReference type="RefSeq" id="WP_011406480.1">
    <property type="nucleotide sequence ID" value="NC_007681.1"/>
</dbReference>
<dbReference type="SMR" id="Q2NFX2"/>
<dbReference type="STRING" id="339860.Msp_0893"/>
<dbReference type="KEGG" id="mst:Msp_0893"/>
<dbReference type="eggNOG" id="arCOG04091">
    <property type="taxonomic scope" value="Archaea"/>
</dbReference>
<dbReference type="HOGENOM" id="CLU_098428_1_1_2"/>
<dbReference type="OrthoDB" id="5670at2157"/>
<dbReference type="Proteomes" id="UP000001931">
    <property type="component" value="Chromosome"/>
</dbReference>
<dbReference type="GO" id="GO:1990904">
    <property type="term" value="C:ribonucleoprotein complex"/>
    <property type="evidence" value="ECO:0007669"/>
    <property type="project" value="UniProtKB-KW"/>
</dbReference>
<dbReference type="GO" id="GO:0005840">
    <property type="term" value="C:ribosome"/>
    <property type="evidence" value="ECO:0007669"/>
    <property type="project" value="UniProtKB-KW"/>
</dbReference>
<dbReference type="GO" id="GO:0019843">
    <property type="term" value="F:rRNA binding"/>
    <property type="evidence" value="ECO:0007669"/>
    <property type="project" value="UniProtKB-UniRule"/>
</dbReference>
<dbReference type="GO" id="GO:0003735">
    <property type="term" value="F:structural constituent of ribosome"/>
    <property type="evidence" value="ECO:0007669"/>
    <property type="project" value="InterPro"/>
</dbReference>
<dbReference type="GO" id="GO:0006412">
    <property type="term" value="P:translation"/>
    <property type="evidence" value="ECO:0007669"/>
    <property type="project" value="UniProtKB-UniRule"/>
</dbReference>
<dbReference type="Gene3D" id="3.30.1370.30">
    <property type="match status" value="1"/>
</dbReference>
<dbReference type="Gene3D" id="3.30.1490.10">
    <property type="match status" value="1"/>
</dbReference>
<dbReference type="HAMAP" id="MF_01302_A">
    <property type="entry name" value="Ribosomal_uS8_A"/>
    <property type="match status" value="1"/>
</dbReference>
<dbReference type="InterPro" id="IPR000630">
    <property type="entry name" value="Ribosomal_uS8"/>
</dbReference>
<dbReference type="InterPro" id="IPR047863">
    <property type="entry name" value="Ribosomal_uS8_CS"/>
</dbReference>
<dbReference type="InterPro" id="IPR035987">
    <property type="entry name" value="Ribosomal_uS8_sf"/>
</dbReference>
<dbReference type="NCBIfam" id="NF003115">
    <property type="entry name" value="PRK04034.1"/>
    <property type="match status" value="1"/>
</dbReference>
<dbReference type="PANTHER" id="PTHR11758">
    <property type="entry name" value="40S RIBOSOMAL PROTEIN S15A"/>
    <property type="match status" value="1"/>
</dbReference>
<dbReference type="Pfam" id="PF00410">
    <property type="entry name" value="Ribosomal_S8"/>
    <property type="match status" value="1"/>
</dbReference>
<dbReference type="SUPFAM" id="SSF56047">
    <property type="entry name" value="Ribosomal protein S8"/>
    <property type="match status" value="1"/>
</dbReference>
<dbReference type="PROSITE" id="PS00053">
    <property type="entry name" value="RIBOSOMAL_S8"/>
    <property type="match status" value="1"/>
</dbReference>
<evidence type="ECO:0000255" key="1">
    <source>
        <dbReference type="HAMAP-Rule" id="MF_01302"/>
    </source>
</evidence>
<evidence type="ECO:0000305" key="2"/>
<reference key="1">
    <citation type="journal article" date="2006" name="J. Bacteriol.">
        <title>The genome sequence of Methanosphaera stadtmanae reveals why this human intestinal archaeon is restricted to methanol and H2 for methane formation and ATP synthesis.</title>
        <authorList>
            <person name="Fricke W.F."/>
            <person name="Seedorf H."/>
            <person name="Henne A."/>
            <person name="Kruer M."/>
            <person name="Liesegang H."/>
            <person name="Hedderich R."/>
            <person name="Gottschalk G."/>
            <person name="Thauer R.K."/>
        </authorList>
    </citation>
    <scope>NUCLEOTIDE SEQUENCE [LARGE SCALE GENOMIC DNA]</scope>
    <source>
        <strain>ATCC 43021 / DSM 3091 / JCM 11832 / MCB-3</strain>
    </source>
</reference>
<protein>
    <recommendedName>
        <fullName evidence="1">Small ribosomal subunit protein uS8</fullName>
    </recommendedName>
    <alternativeName>
        <fullName evidence="2">30S ribosomal protein S8</fullName>
    </alternativeName>
</protein>
<accession>Q2NFX2</accession>
<feature type="chain" id="PRO_0000290969" description="Small ribosomal subunit protein uS8">
    <location>
        <begin position="1"/>
        <end position="130"/>
    </location>
</feature>
<gene>
    <name evidence="1" type="primary">rps8</name>
    <name type="ordered locus">Msp_0893</name>
</gene>
<keyword id="KW-1185">Reference proteome</keyword>
<keyword id="KW-0687">Ribonucleoprotein</keyword>
<keyword id="KW-0689">Ribosomal protein</keyword>
<keyword id="KW-0694">RNA-binding</keyword>
<keyword id="KW-0699">rRNA-binding</keyword>
<comment type="function">
    <text evidence="1">One of the primary rRNA binding proteins, it binds directly to 16S rRNA central domain where it helps coordinate assembly of the platform of the 30S subunit.</text>
</comment>
<comment type="subunit">
    <text evidence="1">Part of the 30S ribosomal subunit.</text>
</comment>
<comment type="similarity">
    <text evidence="1">Belongs to the universal ribosomal protein uS8 family.</text>
</comment>
<proteinExistence type="inferred from homology"/>
<name>RS8_METST</name>